<proteinExistence type="inferred from homology"/>
<gene>
    <name evidence="1" type="primary">aroQ</name>
    <name type="ordered locus">P9515_04491</name>
</gene>
<keyword id="KW-0028">Amino-acid biosynthesis</keyword>
<keyword id="KW-0057">Aromatic amino acid biosynthesis</keyword>
<keyword id="KW-0456">Lyase</keyword>
<reference key="1">
    <citation type="journal article" date="2007" name="PLoS Genet.">
        <title>Patterns and implications of gene gain and loss in the evolution of Prochlorococcus.</title>
        <authorList>
            <person name="Kettler G.C."/>
            <person name="Martiny A.C."/>
            <person name="Huang K."/>
            <person name="Zucker J."/>
            <person name="Coleman M.L."/>
            <person name="Rodrigue S."/>
            <person name="Chen F."/>
            <person name="Lapidus A."/>
            <person name="Ferriera S."/>
            <person name="Johnson J."/>
            <person name="Steglich C."/>
            <person name="Church G.M."/>
            <person name="Richardson P."/>
            <person name="Chisholm S.W."/>
        </authorList>
    </citation>
    <scope>NUCLEOTIDE SEQUENCE [LARGE SCALE GENOMIC DNA]</scope>
    <source>
        <strain>MIT 9515</strain>
    </source>
</reference>
<comment type="function">
    <text evidence="1">Catalyzes a trans-dehydration via an enolate intermediate.</text>
</comment>
<comment type="catalytic activity">
    <reaction evidence="1">
        <text>3-dehydroquinate = 3-dehydroshikimate + H2O</text>
        <dbReference type="Rhea" id="RHEA:21096"/>
        <dbReference type="ChEBI" id="CHEBI:15377"/>
        <dbReference type="ChEBI" id="CHEBI:16630"/>
        <dbReference type="ChEBI" id="CHEBI:32364"/>
        <dbReference type="EC" id="4.2.1.10"/>
    </reaction>
</comment>
<comment type="pathway">
    <text evidence="1">Metabolic intermediate biosynthesis; chorismate biosynthesis; chorismate from D-erythrose 4-phosphate and phosphoenolpyruvate: step 3/7.</text>
</comment>
<comment type="subunit">
    <text evidence="1">Homododecamer.</text>
</comment>
<comment type="similarity">
    <text evidence="1">Belongs to the type-II 3-dehydroquinase family.</text>
</comment>
<protein>
    <recommendedName>
        <fullName evidence="1">3-dehydroquinate dehydratase</fullName>
        <shortName evidence="1">3-dehydroquinase</shortName>
        <ecNumber evidence="1">4.2.1.10</ecNumber>
    </recommendedName>
    <alternativeName>
        <fullName evidence="1">Type II DHQase</fullName>
    </alternativeName>
</protein>
<evidence type="ECO:0000255" key="1">
    <source>
        <dbReference type="HAMAP-Rule" id="MF_00169"/>
    </source>
</evidence>
<accession>A2BV47</accession>
<sequence length="146" mass="16201">MNILLINGPNLNLLGTREPEIYGSKTLNDIENDLSSIANDKIINLECFQSNHEGEIVDKIQDSIKNVQGILINAGAFTHTSISIRDALIGSKIPFVELHISNIFSREEFRKESFLTDKAIGIISGFGISSYSLGLYGIIEYLKNKK</sequence>
<feature type="chain" id="PRO_1000023494" description="3-dehydroquinate dehydratase">
    <location>
        <begin position="1"/>
        <end position="146"/>
    </location>
</feature>
<feature type="active site" description="Proton acceptor" evidence="1">
    <location>
        <position position="22"/>
    </location>
</feature>
<feature type="active site" description="Proton donor" evidence="1">
    <location>
        <position position="99"/>
    </location>
</feature>
<feature type="binding site" evidence="1">
    <location>
        <position position="73"/>
    </location>
    <ligand>
        <name>substrate</name>
    </ligand>
</feature>
<feature type="binding site" evidence="1">
    <location>
        <position position="79"/>
    </location>
    <ligand>
        <name>substrate</name>
    </ligand>
</feature>
<feature type="binding site" evidence="1">
    <location>
        <position position="86"/>
    </location>
    <ligand>
        <name>substrate</name>
    </ligand>
</feature>
<feature type="binding site" evidence="1">
    <location>
        <begin position="100"/>
        <end position="101"/>
    </location>
    <ligand>
        <name>substrate</name>
    </ligand>
</feature>
<feature type="binding site" evidence="1">
    <location>
        <position position="110"/>
    </location>
    <ligand>
        <name>substrate</name>
    </ligand>
</feature>
<feature type="site" description="Transition state stabilizer" evidence="1">
    <location>
        <position position="17"/>
    </location>
</feature>
<organism>
    <name type="scientific">Prochlorococcus marinus (strain MIT 9515)</name>
    <dbReference type="NCBI Taxonomy" id="167542"/>
    <lineage>
        <taxon>Bacteria</taxon>
        <taxon>Bacillati</taxon>
        <taxon>Cyanobacteriota</taxon>
        <taxon>Cyanophyceae</taxon>
        <taxon>Synechococcales</taxon>
        <taxon>Prochlorococcaceae</taxon>
        <taxon>Prochlorococcus</taxon>
    </lineage>
</organism>
<dbReference type="EC" id="4.2.1.10" evidence="1"/>
<dbReference type="EMBL" id="CP000552">
    <property type="protein sequence ID" value="ABM71658.1"/>
    <property type="molecule type" value="Genomic_DNA"/>
</dbReference>
<dbReference type="RefSeq" id="WP_011819766.1">
    <property type="nucleotide sequence ID" value="NC_008817.1"/>
</dbReference>
<dbReference type="SMR" id="A2BV47"/>
<dbReference type="STRING" id="167542.P9515_04491"/>
<dbReference type="GeneID" id="60200509"/>
<dbReference type="KEGG" id="pmc:P9515_04491"/>
<dbReference type="eggNOG" id="COG0757">
    <property type="taxonomic scope" value="Bacteria"/>
</dbReference>
<dbReference type="HOGENOM" id="CLU_090968_1_0_3"/>
<dbReference type="OrthoDB" id="9790793at2"/>
<dbReference type="UniPathway" id="UPA00053">
    <property type="reaction ID" value="UER00086"/>
</dbReference>
<dbReference type="Proteomes" id="UP000001589">
    <property type="component" value="Chromosome"/>
</dbReference>
<dbReference type="GO" id="GO:0003855">
    <property type="term" value="F:3-dehydroquinate dehydratase activity"/>
    <property type="evidence" value="ECO:0007669"/>
    <property type="project" value="UniProtKB-UniRule"/>
</dbReference>
<dbReference type="GO" id="GO:0008652">
    <property type="term" value="P:amino acid biosynthetic process"/>
    <property type="evidence" value="ECO:0007669"/>
    <property type="project" value="UniProtKB-KW"/>
</dbReference>
<dbReference type="GO" id="GO:0009073">
    <property type="term" value="P:aromatic amino acid family biosynthetic process"/>
    <property type="evidence" value="ECO:0007669"/>
    <property type="project" value="UniProtKB-KW"/>
</dbReference>
<dbReference type="GO" id="GO:0009423">
    <property type="term" value="P:chorismate biosynthetic process"/>
    <property type="evidence" value="ECO:0007669"/>
    <property type="project" value="UniProtKB-UniRule"/>
</dbReference>
<dbReference type="GO" id="GO:0019631">
    <property type="term" value="P:quinate catabolic process"/>
    <property type="evidence" value="ECO:0007669"/>
    <property type="project" value="TreeGrafter"/>
</dbReference>
<dbReference type="CDD" id="cd00466">
    <property type="entry name" value="DHQase_II"/>
    <property type="match status" value="1"/>
</dbReference>
<dbReference type="Gene3D" id="3.40.50.9100">
    <property type="entry name" value="Dehydroquinase, class II"/>
    <property type="match status" value="1"/>
</dbReference>
<dbReference type="HAMAP" id="MF_00169">
    <property type="entry name" value="AroQ"/>
    <property type="match status" value="1"/>
</dbReference>
<dbReference type="InterPro" id="IPR001874">
    <property type="entry name" value="DHquinase_II"/>
</dbReference>
<dbReference type="InterPro" id="IPR018509">
    <property type="entry name" value="DHquinase_II_CS"/>
</dbReference>
<dbReference type="InterPro" id="IPR036441">
    <property type="entry name" value="DHquinase_II_sf"/>
</dbReference>
<dbReference type="NCBIfam" id="TIGR01088">
    <property type="entry name" value="aroQ"/>
    <property type="match status" value="1"/>
</dbReference>
<dbReference type="NCBIfam" id="NF003804">
    <property type="entry name" value="PRK05395.1-1"/>
    <property type="match status" value="1"/>
</dbReference>
<dbReference type="NCBIfam" id="NF003805">
    <property type="entry name" value="PRK05395.1-2"/>
    <property type="match status" value="1"/>
</dbReference>
<dbReference type="NCBIfam" id="NF003806">
    <property type="entry name" value="PRK05395.1-3"/>
    <property type="match status" value="1"/>
</dbReference>
<dbReference type="NCBIfam" id="NF003807">
    <property type="entry name" value="PRK05395.1-4"/>
    <property type="match status" value="1"/>
</dbReference>
<dbReference type="PANTHER" id="PTHR21272">
    <property type="entry name" value="CATABOLIC 3-DEHYDROQUINASE"/>
    <property type="match status" value="1"/>
</dbReference>
<dbReference type="PANTHER" id="PTHR21272:SF3">
    <property type="entry name" value="CATABOLIC 3-DEHYDROQUINASE"/>
    <property type="match status" value="1"/>
</dbReference>
<dbReference type="Pfam" id="PF01220">
    <property type="entry name" value="DHquinase_II"/>
    <property type="match status" value="1"/>
</dbReference>
<dbReference type="PIRSF" id="PIRSF001399">
    <property type="entry name" value="DHquinase_II"/>
    <property type="match status" value="1"/>
</dbReference>
<dbReference type="SUPFAM" id="SSF52304">
    <property type="entry name" value="Type II 3-dehydroquinate dehydratase"/>
    <property type="match status" value="1"/>
</dbReference>
<dbReference type="PROSITE" id="PS01029">
    <property type="entry name" value="DEHYDROQUINASE_II"/>
    <property type="match status" value="1"/>
</dbReference>
<name>AROQ_PROM5</name>